<name>PTAC5_ARATH</name>
<feature type="transit peptide" description="Chloroplast" evidence="1">
    <location>
        <begin position="1"/>
        <end position="40"/>
    </location>
</feature>
<feature type="chain" id="PRO_0000441697" description="Protein disulfide isomerase pTAC5, chloroplastic" evidence="1">
    <location>
        <begin position="41"/>
        <end position="387"/>
    </location>
</feature>
<feature type="zinc finger region" description="CR-type" evidence="2">
    <location>
        <begin position="318"/>
        <end position="387"/>
    </location>
</feature>
<feature type="coiled-coil region" evidence="1">
    <location>
        <begin position="72"/>
        <end position="106"/>
    </location>
</feature>
<feature type="coiled-coil region" evidence="1">
    <location>
        <begin position="143"/>
        <end position="163"/>
    </location>
</feature>
<feature type="splice variant" id="VSP_059090" description="In isoform 2.">
    <original>EAGNGAVFTSVTQVPEK</original>
    <variation>SSYDRIWTPIVCFWQAC</variation>
    <location>
        <begin position="262"/>
        <end position="278"/>
    </location>
</feature>
<feature type="splice variant" id="VSP_059091" description="In isoform 2.">
    <location>
        <begin position="279"/>
        <end position="387"/>
    </location>
</feature>
<keyword id="KW-0025">Alternative splicing</keyword>
<keyword id="KW-0150">Chloroplast</keyword>
<keyword id="KW-0175">Coiled coil</keyword>
<keyword id="KW-0413">Isomerase</keyword>
<keyword id="KW-0479">Metal-binding</keyword>
<keyword id="KW-0934">Plastid</keyword>
<keyword id="KW-1185">Reference proteome</keyword>
<keyword id="KW-0346">Stress response</keyword>
<keyword id="KW-0804">Transcription</keyword>
<keyword id="KW-0805">Transcription regulation</keyword>
<keyword id="KW-0809">Transit peptide</keyword>
<keyword id="KW-0862">Zinc</keyword>
<keyword id="KW-0863">Zinc-finger</keyword>
<sequence>MASSSLPLSLPFPLRSLTSTTRSLPFQCSPLFFSIPSSIVCFSTQNPDREEVRWLREEQRWIREEQRWIREEQRWIRERESLLQEISDLQLRIQSLESRNSQLGNSIPDTISNIAALLQVLKEKNRISESGLSATPMVLESTREQIVEEVEEEEKRVIIAEEKVRVSEPVKKIKRRILKVGSEGDDVQALQEALLKLGFYSGEEDMEFSSFSSGTASAVKTWQASLGVREDGVMTAELLQRLFMDEDVETDKDEASTMKKEEAGNGAVFTSVTQVPEKKQSIVKDQSDREVDVTQNRVFLLGENRWEDPSRLIGRNKPVDRSESTNTKTRCITCRGEGRLMCLECDGTGEPNIEPQFMEWVGEDTKCPYCEGLGYTVCDVCDGKKNL</sequence>
<gene>
    <name evidence="5" type="primary">PTAC5</name>
    <name evidence="8" type="ordered locus">At4g13670</name>
    <name evidence="9" type="ORF">F18A5.60</name>
</gene>
<protein>
    <recommendedName>
        <fullName evidence="6">Protein disulfide isomerase pTAC5, chloroplastic</fullName>
        <ecNumber evidence="3">5.3.4.1</ecNumber>
    </recommendedName>
    <alternativeName>
        <fullName evidence="5">Protein PLASTID TRANSCRIPTIONALLY ACTIVE 5</fullName>
        <shortName evidence="5">pTAC5</shortName>
    </alternativeName>
</protein>
<reference key="1">
    <citation type="journal article" date="1999" name="Nature">
        <title>Sequence and analysis of chromosome 4 of the plant Arabidopsis thaliana.</title>
        <authorList>
            <person name="Mayer K.F.X."/>
            <person name="Schueller C."/>
            <person name="Wambutt R."/>
            <person name="Murphy G."/>
            <person name="Volckaert G."/>
            <person name="Pohl T."/>
            <person name="Duesterhoeft A."/>
            <person name="Stiekema W."/>
            <person name="Entian K.-D."/>
            <person name="Terryn N."/>
            <person name="Harris B."/>
            <person name="Ansorge W."/>
            <person name="Brandt P."/>
            <person name="Grivell L.A."/>
            <person name="Rieger M."/>
            <person name="Weichselgartner M."/>
            <person name="de Simone V."/>
            <person name="Obermaier B."/>
            <person name="Mache R."/>
            <person name="Mueller M."/>
            <person name="Kreis M."/>
            <person name="Delseny M."/>
            <person name="Puigdomenech P."/>
            <person name="Watson M."/>
            <person name="Schmidtheini T."/>
            <person name="Reichert B."/>
            <person name="Portetelle D."/>
            <person name="Perez-Alonso M."/>
            <person name="Boutry M."/>
            <person name="Bancroft I."/>
            <person name="Vos P."/>
            <person name="Hoheisel J."/>
            <person name="Zimmermann W."/>
            <person name="Wedler H."/>
            <person name="Ridley P."/>
            <person name="Langham S.-A."/>
            <person name="McCullagh B."/>
            <person name="Bilham L."/>
            <person name="Robben J."/>
            <person name="van der Schueren J."/>
            <person name="Grymonprez B."/>
            <person name="Chuang Y.-J."/>
            <person name="Vandenbussche F."/>
            <person name="Braeken M."/>
            <person name="Weltjens I."/>
            <person name="Voet M."/>
            <person name="Bastiaens I."/>
            <person name="Aert R."/>
            <person name="Defoor E."/>
            <person name="Weitzenegger T."/>
            <person name="Bothe G."/>
            <person name="Ramsperger U."/>
            <person name="Hilbert H."/>
            <person name="Braun M."/>
            <person name="Holzer E."/>
            <person name="Brandt A."/>
            <person name="Peters S."/>
            <person name="van Staveren M."/>
            <person name="Dirkse W."/>
            <person name="Mooijman P."/>
            <person name="Klein Lankhorst R."/>
            <person name="Rose M."/>
            <person name="Hauf J."/>
            <person name="Koetter P."/>
            <person name="Berneiser S."/>
            <person name="Hempel S."/>
            <person name="Feldpausch M."/>
            <person name="Lamberth S."/>
            <person name="Van den Daele H."/>
            <person name="De Keyser A."/>
            <person name="Buysshaert C."/>
            <person name="Gielen J."/>
            <person name="Villarroel R."/>
            <person name="De Clercq R."/>
            <person name="van Montagu M."/>
            <person name="Rogers J."/>
            <person name="Cronin A."/>
            <person name="Quail M.A."/>
            <person name="Bray-Allen S."/>
            <person name="Clark L."/>
            <person name="Doggett J."/>
            <person name="Hall S."/>
            <person name="Kay M."/>
            <person name="Lennard N."/>
            <person name="McLay K."/>
            <person name="Mayes R."/>
            <person name="Pettett A."/>
            <person name="Rajandream M.A."/>
            <person name="Lyne M."/>
            <person name="Benes V."/>
            <person name="Rechmann S."/>
            <person name="Borkova D."/>
            <person name="Bloecker H."/>
            <person name="Scharfe M."/>
            <person name="Grimm M."/>
            <person name="Loehnert T.-H."/>
            <person name="Dose S."/>
            <person name="de Haan M."/>
            <person name="Maarse A.C."/>
            <person name="Schaefer M."/>
            <person name="Mueller-Auer S."/>
            <person name="Gabel C."/>
            <person name="Fuchs M."/>
            <person name="Fartmann B."/>
            <person name="Granderath K."/>
            <person name="Dauner D."/>
            <person name="Herzl A."/>
            <person name="Neumann S."/>
            <person name="Argiriou A."/>
            <person name="Vitale D."/>
            <person name="Liguori R."/>
            <person name="Piravandi E."/>
            <person name="Massenet O."/>
            <person name="Quigley F."/>
            <person name="Clabauld G."/>
            <person name="Muendlein A."/>
            <person name="Felber R."/>
            <person name="Schnabl S."/>
            <person name="Hiller R."/>
            <person name="Schmidt W."/>
            <person name="Lecharny A."/>
            <person name="Aubourg S."/>
            <person name="Chefdor F."/>
            <person name="Cooke R."/>
            <person name="Berger C."/>
            <person name="Monfort A."/>
            <person name="Casacuberta E."/>
            <person name="Gibbons T."/>
            <person name="Weber N."/>
            <person name="Vandenbol M."/>
            <person name="Bargues M."/>
            <person name="Terol J."/>
            <person name="Torres A."/>
            <person name="Perez-Perez A."/>
            <person name="Purnelle B."/>
            <person name="Bent E."/>
            <person name="Johnson S."/>
            <person name="Tacon D."/>
            <person name="Jesse T."/>
            <person name="Heijnen L."/>
            <person name="Schwarz S."/>
            <person name="Scholler P."/>
            <person name="Heber S."/>
            <person name="Francs P."/>
            <person name="Bielke C."/>
            <person name="Frishman D."/>
            <person name="Haase D."/>
            <person name="Lemcke K."/>
            <person name="Mewes H.-W."/>
            <person name="Stocker S."/>
            <person name="Zaccaria P."/>
            <person name="Bevan M."/>
            <person name="Wilson R.K."/>
            <person name="de la Bastide M."/>
            <person name="Habermann K."/>
            <person name="Parnell L."/>
            <person name="Dedhia N."/>
            <person name="Gnoj L."/>
            <person name="Schutz K."/>
            <person name="Huang E."/>
            <person name="Spiegel L."/>
            <person name="Sekhon M."/>
            <person name="Murray J."/>
            <person name="Sheet P."/>
            <person name="Cordes M."/>
            <person name="Abu-Threideh J."/>
            <person name="Stoneking T."/>
            <person name="Kalicki J."/>
            <person name="Graves T."/>
            <person name="Harmon G."/>
            <person name="Edwards J."/>
            <person name="Latreille P."/>
            <person name="Courtney L."/>
            <person name="Cloud J."/>
            <person name="Abbott A."/>
            <person name="Scott K."/>
            <person name="Johnson D."/>
            <person name="Minx P."/>
            <person name="Bentley D."/>
            <person name="Fulton B."/>
            <person name="Miller N."/>
            <person name="Greco T."/>
            <person name="Kemp K."/>
            <person name="Kramer J."/>
            <person name="Fulton L."/>
            <person name="Mardis E."/>
            <person name="Dante M."/>
            <person name="Pepin K."/>
            <person name="Hillier L.W."/>
            <person name="Nelson J."/>
            <person name="Spieth J."/>
            <person name="Ryan E."/>
            <person name="Andrews S."/>
            <person name="Geisel C."/>
            <person name="Layman D."/>
            <person name="Du H."/>
            <person name="Ali J."/>
            <person name="Berghoff A."/>
            <person name="Jones K."/>
            <person name="Drone K."/>
            <person name="Cotton M."/>
            <person name="Joshu C."/>
            <person name="Antonoiu B."/>
            <person name="Zidanic M."/>
            <person name="Strong C."/>
            <person name="Sun H."/>
            <person name="Lamar B."/>
            <person name="Yordan C."/>
            <person name="Ma P."/>
            <person name="Zhong J."/>
            <person name="Preston R."/>
            <person name="Vil D."/>
            <person name="Shekher M."/>
            <person name="Matero A."/>
            <person name="Shah R."/>
            <person name="Swaby I.K."/>
            <person name="O'Shaughnessy A."/>
            <person name="Rodriguez M."/>
            <person name="Hoffman J."/>
            <person name="Till S."/>
            <person name="Granat S."/>
            <person name="Shohdy N."/>
            <person name="Hasegawa A."/>
            <person name="Hameed A."/>
            <person name="Lodhi M."/>
            <person name="Johnson A."/>
            <person name="Chen E."/>
            <person name="Marra M.A."/>
            <person name="Martienssen R."/>
            <person name="McCombie W.R."/>
        </authorList>
    </citation>
    <scope>NUCLEOTIDE SEQUENCE [LARGE SCALE GENOMIC DNA]</scope>
    <source>
        <strain>cv. Columbia</strain>
    </source>
</reference>
<reference key="2">
    <citation type="journal article" date="2017" name="Plant J.">
        <title>Araport11: a complete reannotation of the Arabidopsis thaliana reference genome.</title>
        <authorList>
            <person name="Cheng C.Y."/>
            <person name="Krishnakumar V."/>
            <person name="Chan A.P."/>
            <person name="Thibaud-Nissen F."/>
            <person name="Schobel S."/>
            <person name="Town C.D."/>
        </authorList>
    </citation>
    <scope>GENOME REANNOTATION</scope>
    <source>
        <strain>cv. Columbia</strain>
    </source>
</reference>
<reference key="3">
    <citation type="submission" date="2006-12" db="EMBL/GenBank/DDBJ databases">
        <title>Arabidopsis ORF clones.</title>
        <authorList>
            <person name="Bautista V.R."/>
            <person name="Kim C.J."/>
            <person name="Chen H."/>
            <person name="Quinitio C."/>
            <person name="Ecker J.R."/>
        </authorList>
    </citation>
    <scope>NUCLEOTIDE SEQUENCE [LARGE SCALE MRNA] (ISOFORM 1)</scope>
    <source>
        <strain>cv. Columbia</strain>
    </source>
</reference>
<reference key="4">
    <citation type="journal article" date="2006" name="Plant Cell">
        <title>pTAC2, -6, and -12 are components of the transcriptionally active plastid chromosome that are required for plastid gene expression.</title>
        <authorList>
            <person name="Pfalz J."/>
            <person name="Liere K."/>
            <person name="Kandlbinder A."/>
            <person name="Dietz K.-J."/>
            <person name="Oelmueller R."/>
        </authorList>
    </citation>
    <scope>GENE FAMILY</scope>
    <scope>NOMENCLATURE</scope>
</reference>
<reference key="5">
    <citation type="journal article" date="2013" name="Plant Cell">
        <title>Chloroplast small heat shock protein HSP21 interacts with plastid nucleoid protein pTAC5 and is essential for chloroplast development in Arabidopsis under heat stress.</title>
        <authorList>
            <person name="Zhong L."/>
            <person name="Zhou W."/>
            <person name="Wang H."/>
            <person name="Ding S."/>
            <person name="Lu Q."/>
            <person name="Wen X."/>
            <person name="Peng L."/>
            <person name="Zhang L."/>
            <person name="Lu C."/>
        </authorList>
    </citation>
    <scope>FUNCTION</scope>
    <scope>DISRUPTION PHENOTYPE</scope>
    <scope>CATALYTIC ACTIVITY</scope>
    <scope>INTERACTION WITH HSP21</scope>
    <scope>SUBCELLULAR LOCATION</scope>
    <source>
        <strain>cv. Columbia</strain>
    </source>
</reference>
<reference key="6">
    <citation type="journal article" date="2013" name="PLoS ONE">
        <title>The reduced plastid-encoded polymerase-dependent plastid gene expression leads to the delayed greening of the Arabidopsis fln2 mutant.</title>
        <authorList>
            <person name="Huang C."/>
            <person name="Yu Q.-B."/>
            <person name="Lv R.-H."/>
            <person name="Yin Q.-Q."/>
            <person name="Chen G.-Y."/>
            <person name="Xu L."/>
            <person name="Yang Z.-N."/>
        </authorList>
    </citation>
    <scope>INTERACTION WITH FLN2</scope>
    <source>
        <strain>cv. Columbia</strain>
    </source>
</reference>
<organism>
    <name type="scientific">Arabidopsis thaliana</name>
    <name type="common">Mouse-ear cress</name>
    <dbReference type="NCBI Taxonomy" id="3702"/>
    <lineage>
        <taxon>Eukaryota</taxon>
        <taxon>Viridiplantae</taxon>
        <taxon>Streptophyta</taxon>
        <taxon>Embryophyta</taxon>
        <taxon>Tracheophyta</taxon>
        <taxon>Spermatophyta</taxon>
        <taxon>Magnoliopsida</taxon>
        <taxon>eudicotyledons</taxon>
        <taxon>Gunneridae</taxon>
        <taxon>Pentapetalae</taxon>
        <taxon>rosids</taxon>
        <taxon>malvids</taxon>
        <taxon>Brassicales</taxon>
        <taxon>Brassicaceae</taxon>
        <taxon>Camelineae</taxon>
        <taxon>Arabidopsis</taxon>
    </lineage>
</organism>
<proteinExistence type="evidence at protein level"/>
<dbReference type="EC" id="5.3.4.1" evidence="3"/>
<dbReference type="EMBL" id="AL035528">
    <property type="protein sequence ID" value="CAB36831.1"/>
    <property type="status" value="ALT_SEQ"/>
    <property type="molecule type" value="Genomic_DNA"/>
</dbReference>
<dbReference type="EMBL" id="AL161537">
    <property type="protein sequence ID" value="CAB78409.1"/>
    <property type="status" value="ALT_SEQ"/>
    <property type="molecule type" value="Genomic_DNA"/>
</dbReference>
<dbReference type="EMBL" id="CP002687">
    <property type="protein sequence ID" value="AEE83311.1"/>
    <property type="molecule type" value="Genomic_DNA"/>
</dbReference>
<dbReference type="EMBL" id="CP002687">
    <property type="protein sequence ID" value="ANM66498.1"/>
    <property type="molecule type" value="Genomic_DNA"/>
</dbReference>
<dbReference type="EMBL" id="CP002687">
    <property type="protein sequence ID" value="ANM66499.1"/>
    <property type="molecule type" value="Genomic_DNA"/>
</dbReference>
<dbReference type="EMBL" id="BT029541">
    <property type="protein sequence ID" value="ABL66797.1"/>
    <property type="molecule type" value="mRNA"/>
</dbReference>
<dbReference type="PIR" id="T05236">
    <property type="entry name" value="T05236"/>
</dbReference>
<dbReference type="RefSeq" id="NP_001328389.1">
    <molecule id="A1A6M1-2"/>
    <property type="nucleotide sequence ID" value="NM_001340874.1"/>
</dbReference>
<dbReference type="RefSeq" id="NP_001328390.1">
    <molecule id="A1A6M1-2"/>
    <property type="nucleotide sequence ID" value="NM_001340872.1"/>
</dbReference>
<dbReference type="RefSeq" id="NP_193103.2">
    <molecule id="A1A6M1-1"/>
    <property type="nucleotide sequence ID" value="NM_117441.4"/>
</dbReference>
<dbReference type="SMR" id="A1A6M1"/>
<dbReference type="FunCoup" id="A1A6M1">
    <property type="interactions" value="1405"/>
</dbReference>
<dbReference type="IntAct" id="A1A6M1">
    <property type="interactions" value="1"/>
</dbReference>
<dbReference type="MINT" id="A1A6M1"/>
<dbReference type="STRING" id="3702.A1A6M1"/>
<dbReference type="iPTMnet" id="A1A6M1"/>
<dbReference type="PaxDb" id="3702-AT4G13670.1"/>
<dbReference type="ProteomicsDB" id="248844">
    <molecule id="A1A6M1-1"/>
</dbReference>
<dbReference type="EnsemblPlants" id="AT4G13670.1">
    <molecule id="A1A6M1-1"/>
    <property type="protein sequence ID" value="AT4G13670.1"/>
    <property type="gene ID" value="AT4G13670"/>
</dbReference>
<dbReference type="EnsemblPlants" id="AT4G13670.2">
    <molecule id="A1A6M1-2"/>
    <property type="protein sequence ID" value="AT4G13670.2"/>
    <property type="gene ID" value="AT4G13670"/>
</dbReference>
<dbReference type="EnsemblPlants" id="AT4G13670.4">
    <molecule id="A1A6M1-2"/>
    <property type="protein sequence ID" value="AT4G13670.4"/>
    <property type="gene ID" value="AT4G13670"/>
</dbReference>
<dbReference type="GeneID" id="827001"/>
<dbReference type="Gramene" id="AT4G13670.1">
    <molecule id="A1A6M1-1"/>
    <property type="protein sequence ID" value="AT4G13670.1"/>
    <property type="gene ID" value="AT4G13670"/>
</dbReference>
<dbReference type="Gramene" id="AT4G13670.2">
    <molecule id="A1A6M1-2"/>
    <property type="protein sequence ID" value="AT4G13670.2"/>
    <property type="gene ID" value="AT4G13670"/>
</dbReference>
<dbReference type="Gramene" id="AT4G13670.4">
    <molecule id="A1A6M1-2"/>
    <property type="protein sequence ID" value="AT4G13670.4"/>
    <property type="gene ID" value="AT4G13670"/>
</dbReference>
<dbReference type="KEGG" id="ath:AT4G13670"/>
<dbReference type="Araport" id="AT4G13670"/>
<dbReference type="TAIR" id="AT4G13670">
    <property type="gene designation" value="PTAC5"/>
</dbReference>
<dbReference type="eggNOG" id="ENOG502QRN0">
    <property type="taxonomic scope" value="Eukaryota"/>
</dbReference>
<dbReference type="HOGENOM" id="CLU_718478_0_0_1"/>
<dbReference type="InParanoid" id="A1A6M1"/>
<dbReference type="OMA" id="FMDQIMD"/>
<dbReference type="PhylomeDB" id="A1A6M1"/>
<dbReference type="PRO" id="PR:A1A6M1"/>
<dbReference type="Proteomes" id="UP000006548">
    <property type="component" value="Chromosome 4"/>
</dbReference>
<dbReference type="ExpressionAtlas" id="A1A6M1">
    <property type="expression patterns" value="baseline and differential"/>
</dbReference>
<dbReference type="GO" id="GO:0009507">
    <property type="term" value="C:chloroplast"/>
    <property type="evidence" value="ECO:0007005"/>
    <property type="project" value="TAIR"/>
</dbReference>
<dbReference type="GO" id="GO:0009941">
    <property type="term" value="C:chloroplast envelope"/>
    <property type="evidence" value="ECO:0007005"/>
    <property type="project" value="TAIR"/>
</dbReference>
<dbReference type="GO" id="GO:0042644">
    <property type="term" value="C:chloroplast nucleoid"/>
    <property type="evidence" value="ECO:0000314"/>
    <property type="project" value="UniProtKB"/>
</dbReference>
<dbReference type="GO" id="GO:0009534">
    <property type="term" value="C:chloroplast thylakoid"/>
    <property type="evidence" value="ECO:0007005"/>
    <property type="project" value="TAIR"/>
</dbReference>
<dbReference type="GO" id="GO:0009535">
    <property type="term" value="C:chloroplast thylakoid membrane"/>
    <property type="evidence" value="ECO:0007005"/>
    <property type="project" value="TAIR"/>
</dbReference>
<dbReference type="GO" id="GO:0005829">
    <property type="term" value="C:cytosol"/>
    <property type="evidence" value="ECO:0007005"/>
    <property type="project" value="TAIR"/>
</dbReference>
<dbReference type="GO" id="GO:0003756">
    <property type="term" value="F:protein disulfide isomerase activity"/>
    <property type="evidence" value="ECO:0000314"/>
    <property type="project" value="CACAO"/>
</dbReference>
<dbReference type="GO" id="GO:0008270">
    <property type="term" value="F:zinc ion binding"/>
    <property type="evidence" value="ECO:0007669"/>
    <property type="project" value="UniProtKB-KW"/>
</dbReference>
<dbReference type="GO" id="GO:0009658">
    <property type="term" value="P:chloroplast organization"/>
    <property type="evidence" value="ECO:0000315"/>
    <property type="project" value="UniProtKB"/>
</dbReference>
<dbReference type="GO" id="GO:0042793">
    <property type="term" value="P:plastid transcription"/>
    <property type="evidence" value="ECO:0000315"/>
    <property type="project" value="UniProtKB"/>
</dbReference>
<dbReference type="GO" id="GO:0006355">
    <property type="term" value="P:regulation of DNA-templated transcription"/>
    <property type="evidence" value="ECO:0000315"/>
    <property type="project" value="UniProtKB"/>
</dbReference>
<dbReference type="GO" id="GO:0009408">
    <property type="term" value="P:response to heat"/>
    <property type="evidence" value="ECO:0000315"/>
    <property type="project" value="UniProtKB"/>
</dbReference>
<dbReference type="GO" id="GO:0009416">
    <property type="term" value="P:response to light stimulus"/>
    <property type="evidence" value="ECO:0000314"/>
    <property type="project" value="UniProtKB"/>
</dbReference>
<dbReference type="FunFam" id="1.10.101.10:FF:000028">
    <property type="entry name" value="Plastid transcriptionally active 5"/>
    <property type="match status" value="1"/>
</dbReference>
<dbReference type="Gene3D" id="1.10.101.10">
    <property type="entry name" value="PGBD-like superfamily/PGBD"/>
    <property type="match status" value="1"/>
</dbReference>
<dbReference type="InterPro" id="IPR036410">
    <property type="entry name" value="HSP_DnaJ_Cys-rich_dom_sf"/>
</dbReference>
<dbReference type="InterPro" id="IPR002477">
    <property type="entry name" value="Peptidoglycan-bd-like"/>
</dbReference>
<dbReference type="InterPro" id="IPR036365">
    <property type="entry name" value="PGBD-like_sf"/>
</dbReference>
<dbReference type="InterPro" id="IPR036366">
    <property type="entry name" value="PGBDSf"/>
</dbReference>
<dbReference type="PANTHER" id="PTHR15852">
    <property type="entry name" value="PLASTID TRANSCRIPTIONALLY ACTIVE PROTEIN"/>
    <property type="match status" value="1"/>
</dbReference>
<dbReference type="PANTHER" id="PTHR15852:SF16">
    <property type="entry name" value="PROTEIN DISULFIDE ISOMERASE PTAC5, CHLOROPLASTIC"/>
    <property type="match status" value="1"/>
</dbReference>
<dbReference type="Pfam" id="PF01471">
    <property type="entry name" value="PG_binding_1"/>
    <property type="match status" value="1"/>
</dbReference>
<dbReference type="SUPFAM" id="SSF57938">
    <property type="entry name" value="DnaJ/Hsp40 cysteine-rich domain"/>
    <property type="match status" value="1"/>
</dbReference>
<dbReference type="SUPFAM" id="SSF47090">
    <property type="entry name" value="PGBD-like"/>
    <property type="match status" value="1"/>
</dbReference>
<accession>A1A6M1</accession>
<accession>A0A1P8B4I4</accession>
<accession>Q9SVP5</accession>
<evidence type="ECO:0000255" key="1"/>
<evidence type="ECO:0000255" key="2">
    <source>
        <dbReference type="PROSITE-ProRule" id="PRU00546"/>
    </source>
</evidence>
<evidence type="ECO:0000269" key="3">
    <source>
    </source>
</evidence>
<evidence type="ECO:0000269" key="4">
    <source>
    </source>
</evidence>
<evidence type="ECO:0000303" key="5">
    <source>
    </source>
</evidence>
<evidence type="ECO:0000303" key="6">
    <source>
    </source>
</evidence>
<evidence type="ECO:0000305" key="7"/>
<evidence type="ECO:0000312" key="8">
    <source>
        <dbReference type="Araport" id="AT4G13670"/>
    </source>
</evidence>
<evidence type="ECO:0000312" key="9">
    <source>
        <dbReference type="EMBL" id="CAB36831.1"/>
    </source>
</evidence>
<comment type="function">
    <text evidence="3">Exhibits zinc-dependent disulfide isomerase activity. Required for seedling and chloroplast development under heat stress, probably by maintaining plastid-encoded RNA polymerase (PEP)-dependent transcription.</text>
</comment>
<comment type="catalytic activity">
    <reaction evidence="3">
        <text>Catalyzes the rearrangement of -S-S- bonds in proteins.</text>
        <dbReference type="EC" id="5.3.4.1"/>
    </reaction>
</comment>
<comment type="subunit">
    <text evidence="3 4">Interacts with HSP21; the formed complex associates with the plastid-encoded RNA polymerase (PEP) complex not only during transcription initiation, but also during elongation and termination, and with a stronger efficiency in illuminated chloroplasts. Binds to promoter regions of PEP-dependent genes, especially after a heat stress (PubMed:23922206). Interacts with FLN2 (PubMed:24019900).</text>
</comment>
<comment type="subcellular location">
    <subcellularLocation>
        <location evidence="3">Plastid</location>
        <location evidence="3">Chloroplast stroma</location>
        <location evidence="3">Chloroplast nucleoid</location>
    </subcellularLocation>
</comment>
<comment type="alternative products">
    <event type="alternative splicing"/>
    <isoform>
        <id>A1A6M1-1</id>
        <name>1</name>
        <sequence type="displayed"/>
    </isoform>
    <isoform>
        <id>A1A6M1-2</id>
        <name>2</name>
        <sequence type="described" ref="VSP_059090 VSP_059091"/>
    </isoform>
</comment>
<comment type="disruption phenotype">
    <text evidence="3">Ivory phenotype under heat stress.</text>
</comment>
<comment type="sequence caution" evidence="7">
    <conflict type="erroneous gene model prediction">
        <sequence resource="EMBL-CDS" id="CAB36831"/>
    </conflict>
</comment>
<comment type="sequence caution" evidence="7">
    <conflict type="erroneous gene model prediction">
        <sequence resource="EMBL-CDS" id="CAB78409"/>
    </conflict>
</comment>